<feature type="signal peptide" evidence="2">
    <location>
        <begin position="1"/>
        <end position="22"/>
    </location>
</feature>
<feature type="chain" id="PRO_0000239603" description="Envelope glycoprotein">
    <location>
        <begin position="23"/>
        <end position="587"/>
    </location>
</feature>
<feature type="chain" id="PRO_0000040803" description="Surface protein">
    <location>
        <begin position="23"/>
        <end position="395"/>
    </location>
</feature>
<feature type="chain" id="PRO_0000040804" description="Transmembrane protein">
    <location>
        <begin position="396"/>
        <end position="569"/>
    </location>
</feature>
<feature type="peptide" id="PRO_0000239604" description="R-peptide" evidence="1">
    <location>
        <begin position="570"/>
        <end position="587"/>
    </location>
</feature>
<feature type="topological domain" description="Extracellular" evidence="2">
    <location>
        <begin position="23"/>
        <end position="527"/>
    </location>
</feature>
<feature type="transmembrane region" description="Helical" evidence="2">
    <location>
        <begin position="528"/>
        <end position="548"/>
    </location>
</feature>
<feature type="topological domain" description="Cytoplasmic" evidence="2">
    <location>
        <begin position="549"/>
        <end position="587"/>
    </location>
</feature>
<feature type="region of interest" description="Fusion peptide" evidence="1">
    <location>
        <begin position="399"/>
        <end position="419"/>
    </location>
</feature>
<feature type="region of interest" description="Immunosuppression" evidence="1">
    <location>
        <begin position="459"/>
        <end position="475"/>
    </location>
</feature>
<feature type="coiled-coil region" evidence="2">
    <location>
        <begin position="420"/>
        <end position="470"/>
    </location>
</feature>
<feature type="coiled-coil region" evidence="2">
    <location>
        <begin position="480"/>
        <end position="516"/>
    </location>
</feature>
<feature type="short sequence motif" description="CXXC">
    <location>
        <begin position="248"/>
        <end position="251"/>
    </location>
</feature>
<feature type="short sequence motif" description="CX6CC">
    <location>
        <begin position="476"/>
        <end position="484"/>
    </location>
</feature>
<feature type="short sequence motif" description="YXXL motif; contains endocytosis signal" evidence="1">
    <location>
        <begin position="571"/>
        <end position="574"/>
    </location>
</feature>
<feature type="site" description="Cleavage; by host" evidence="1">
    <location>
        <begin position="395"/>
        <end position="396"/>
    </location>
</feature>
<feature type="site" description="Cleavage; by viral protease" evidence="1">
    <location>
        <begin position="569"/>
        <end position="570"/>
    </location>
</feature>
<feature type="glycosylation site" description="N-linked (GlcNAc...) asparagine; by host" evidence="2">
    <location>
        <position position="120"/>
    </location>
</feature>
<feature type="glycosylation site" description="N-linked (GlcNAc...) asparagine; by host" evidence="2">
    <location>
        <position position="237"/>
    </location>
</feature>
<feature type="glycosylation site" description="N-linked (GlcNAc...) asparagine; by host" evidence="2">
    <location>
        <position position="266"/>
    </location>
</feature>
<feature type="glycosylation site" description="N-linked (GlcNAc...) asparagine; by host" evidence="2">
    <location>
        <position position="271"/>
    </location>
</feature>
<feature type="glycosylation site" description="N-linked (GlcNAc...) asparagine; by host" evidence="2">
    <location>
        <position position="277"/>
    </location>
</feature>
<feature type="glycosylation site" description="N-linked (GlcNAc...) asparagine; by host" evidence="2">
    <location>
        <position position="280"/>
    </location>
</feature>
<feature type="glycosylation site" description="N-linked (GlcNAc...) asparagine; by host" evidence="2">
    <location>
        <position position="295"/>
    </location>
</feature>
<feature type="glycosylation site" description="N-linked (GlcNAc...) asparagine; by host" evidence="2">
    <location>
        <position position="308"/>
    </location>
</feature>
<feature type="glycosylation site" description="N-linked (GlcNAc...) asparagine; by host" evidence="2">
    <location>
        <position position="322"/>
    </location>
</feature>
<feature type="glycosylation site" description="N-linked (GlcNAc...) asparagine; by host" evidence="2">
    <location>
        <position position="328"/>
    </location>
</feature>
<feature type="glycosylation site" description="N-linked (GlcNAc...) asparagine; by host" evidence="2">
    <location>
        <position position="340"/>
    </location>
</feature>
<feature type="glycosylation site" description="N-linked (GlcNAc...) asparagine; by host" evidence="2">
    <location>
        <position position="358"/>
    </location>
</feature>
<feature type="glycosylation site" description="N-linked (GlcNAc...) asparagine; by host" evidence="2">
    <location>
        <position position="488"/>
    </location>
</feature>
<feature type="disulfide bond" description="Interchain (between SU and TM chains, or C-251 with C-484); in linked form" evidence="1">
    <location>
        <begin position="248"/>
        <end position="484"/>
    </location>
</feature>
<feature type="disulfide bond" evidence="1">
    <location>
        <begin position="248"/>
        <end position="251"/>
    </location>
</feature>
<feature type="disulfide bond" evidence="1">
    <location>
        <begin position="476"/>
        <end position="483"/>
    </location>
</feature>
<accession>P04027</accession>
<keyword id="KW-0165">Cleavage on pair of basic residues</keyword>
<keyword id="KW-0175">Coiled coil</keyword>
<keyword id="KW-1015">Disulfide bond</keyword>
<keyword id="KW-1169">Fusion of virus membrane with host cell membrane</keyword>
<keyword id="KW-1168">Fusion of virus membrane with host membrane</keyword>
<keyword id="KW-0325">Glycoprotein</keyword>
<keyword id="KW-1032">Host cell membrane</keyword>
<keyword id="KW-1043">Host membrane</keyword>
<keyword id="KW-0945">Host-virus interaction</keyword>
<keyword id="KW-0472">Membrane</keyword>
<keyword id="KW-0732">Signal</keyword>
<keyword id="KW-0812">Transmembrane</keyword>
<keyword id="KW-1133">Transmembrane helix</keyword>
<keyword id="KW-1161">Viral attachment to host cell</keyword>
<keyword id="KW-0261">Viral envelope protein</keyword>
<keyword id="KW-1162">Viral penetration into host cytoplasm</keyword>
<keyword id="KW-0946">Virion</keyword>
<keyword id="KW-1160">Virus entry into host cell</keyword>
<dbReference type="EMBL" id="M11841">
    <property type="protein sequence ID" value="AAA47733.1"/>
    <property type="molecule type" value="Genomic_RNA"/>
</dbReference>
<dbReference type="SMR" id="P04027"/>
<dbReference type="GlyCosmos" id="P04027">
    <property type="glycosylation" value="13 sites, No reported glycans"/>
</dbReference>
<dbReference type="Proteomes" id="UP000007228">
    <property type="component" value="Genome"/>
</dbReference>
<dbReference type="GO" id="GO:0020002">
    <property type="term" value="C:host cell plasma membrane"/>
    <property type="evidence" value="ECO:0007669"/>
    <property type="project" value="UniProtKB-SubCell"/>
</dbReference>
<dbReference type="GO" id="GO:0016020">
    <property type="term" value="C:membrane"/>
    <property type="evidence" value="ECO:0007669"/>
    <property type="project" value="UniProtKB-KW"/>
</dbReference>
<dbReference type="GO" id="GO:0019031">
    <property type="term" value="C:viral envelope"/>
    <property type="evidence" value="ECO:0007669"/>
    <property type="project" value="UniProtKB-KW"/>
</dbReference>
<dbReference type="GO" id="GO:0055036">
    <property type="term" value="C:virion membrane"/>
    <property type="evidence" value="ECO:0007669"/>
    <property type="project" value="UniProtKB-SubCell"/>
</dbReference>
<dbReference type="GO" id="GO:0019064">
    <property type="term" value="P:fusion of virus membrane with host plasma membrane"/>
    <property type="evidence" value="ECO:0007669"/>
    <property type="project" value="UniProtKB-KW"/>
</dbReference>
<dbReference type="GO" id="GO:0046718">
    <property type="term" value="P:symbiont entry into host cell"/>
    <property type="evidence" value="ECO:0007669"/>
    <property type="project" value="UniProtKB-KW"/>
</dbReference>
<dbReference type="GO" id="GO:0019062">
    <property type="term" value="P:virion attachment to host cell"/>
    <property type="evidence" value="ECO:0007669"/>
    <property type="project" value="UniProtKB-KW"/>
</dbReference>
<dbReference type="CDD" id="cd09851">
    <property type="entry name" value="HTLV-1-like_HR1-HR2"/>
    <property type="match status" value="1"/>
</dbReference>
<dbReference type="Gene3D" id="1.10.287.210">
    <property type="match status" value="1"/>
</dbReference>
<dbReference type="InterPro" id="IPR018154">
    <property type="entry name" value="TLV/ENV_coat_polyprotein"/>
</dbReference>
<dbReference type="PANTHER" id="PTHR10424:SF75">
    <property type="entry name" value="ENDOGENOUS RETROVIRUS GROUP S71 MEMBER 1 ENV POLYPROTEIN"/>
    <property type="match status" value="1"/>
</dbReference>
<dbReference type="PANTHER" id="PTHR10424">
    <property type="entry name" value="VIRAL ENVELOPE PROTEIN"/>
    <property type="match status" value="1"/>
</dbReference>
<dbReference type="Pfam" id="PF00429">
    <property type="entry name" value="TLV_coat"/>
    <property type="match status" value="1"/>
</dbReference>
<dbReference type="SUPFAM" id="SSF58069">
    <property type="entry name" value="Virus ectodomain"/>
    <property type="match status" value="1"/>
</dbReference>
<comment type="function">
    <text evidence="1">The surface protein (SU) attaches the virus to the host cell by binding to its receptor. This interaction triggers the refolding of the transmembrane protein (TM) and is thought to activate its fusogenic potential by unmasking its fusion peptide. Fusion occurs at the host cell plasma membrane (By similarity).</text>
</comment>
<comment type="function">
    <text evidence="1">The transmembrane protein (TM) acts as a class I viral fusion protein. Under the current model, the protein has at least 3 conformational states: pre-fusion native state, pre-hairpin intermediate state, and post-fusion hairpin state. During viral and target cell membrane fusion, the coiled coil regions (heptad repeats) assume a trimer-of-hairpins structure, positioning the fusion peptide in close proximity to the C-terminal region of the ectodomain. The formation of this structure appears to drive apposition and subsequent fusion of viral and target cell membranes. Membranes fusion leads to delivery of the nucleocapsid into the cytoplasm (By similarity).</text>
</comment>
<comment type="subunit">
    <text evidence="1">The mature envelope protein (Env) consists of a trimer of SU-TM heterodimers attached by a labile interchain disulfide bond.</text>
</comment>
<comment type="subcellular location">
    <molecule>Transmembrane protein</molecule>
    <subcellularLocation>
        <location evidence="1">Virion membrane</location>
        <topology evidence="1">Single-pass type I membrane protein</topology>
    </subcellularLocation>
    <subcellularLocation>
        <location evidence="1">Host cell membrane</location>
        <topology evidence="1">Single-pass type I membrane protein</topology>
    </subcellularLocation>
</comment>
<comment type="subcellular location">
    <molecule>Surface protein</molecule>
    <subcellularLocation>
        <location>Virion membrane</location>
        <topology>Peripheral membrane protein</topology>
    </subcellularLocation>
    <subcellularLocation>
        <location evidence="1">Host cell membrane</location>
        <topology evidence="1">Peripheral membrane protein</topology>
    </subcellularLocation>
    <text evidence="1">The surface protein is not anchored to the viral envelope, but associates with the extravirion surface through its binding to TM. Both proteins are thought to be concentrated at the site of budding and incorporated into the virions possibly by contacts between the cytoplasmic tail of Env and the N-terminus of Gag (By similarity).</text>
</comment>
<comment type="domain">
    <text evidence="1">The YXXL motif is involved in determining the exact site of viral release at the surface of infected mononuclear cells and promotes endocytosis.</text>
</comment>
<comment type="domain">
    <text evidence="1">The 17 amino acids long immunosuppressive region is present in many retroviral envelope proteins. Synthetic peptides derived from this relatively conserved sequence inhibit immune function in vitro and in vivo (By similarity).</text>
</comment>
<comment type="PTM">
    <text evidence="1">Specific enzymatic cleavages in vivo yield mature proteins. Envelope glycoproteins are synthesized as an inactive precursor that is N-glycosylated and processed likely by host cell furin or by a furin-like protease in the Golgi to yield the mature SU and TM proteins. The cleavage site between SU and TM requires the minimal sequence [KR]-X-[KR]-R. The R-peptide is released from the C-terminus of the cytoplasmic tail of the TM protein upon particle formation as a result of proteolytic cleavage by the viral protease. Cleavage of this peptide is required for TM to become fusogenic (By similarity).</text>
</comment>
<comment type="PTM">
    <text evidence="1">The CXXC motif is highly conserved across a broad range of retroviral envelope proteins. It is thought to participate in the formation of a labile disulfide bond possibly with the CX6CC motif present in the transmembrane protein. Isomerization of the intersubunit disulfide bond to an SU intrachain disulfide bond is thought to occur upon receptor recognition in order to allow membrane fusion (By similarity).</text>
</comment>
<name>ENV_SRV1</name>
<organism>
    <name type="scientific">Simian retrovirus SRV-1</name>
    <dbReference type="NCBI Taxonomy" id="11942"/>
    <lineage>
        <taxon>Viruses</taxon>
        <taxon>Riboviria</taxon>
        <taxon>Pararnavirae</taxon>
        <taxon>Artverviricota</taxon>
        <taxon>Revtraviricetes</taxon>
        <taxon>Ortervirales</taxon>
        <taxon>Retroviridae</taxon>
        <taxon>Orthoretrovirinae</taxon>
        <taxon>Betaretrovirus</taxon>
        <taxon>Mason-Pfizer monkey virus</taxon>
    </lineage>
</organism>
<gene>
    <name type="primary">env</name>
</gene>
<reference key="1">
    <citation type="journal article" date="1986" name="Science">
        <title>Nucleotide sequence of SRV-1, a type D simian acquired immune deficiency syndrome retrovirus.</title>
        <authorList>
            <person name="Power M.D."/>
            <person name="Marx P.A."/>
            <person name="Bryant M.L."/>
            <person name="Gardner M.B."/>
            <person name="Barr P.J."/>
            <person name="Luciw P.A."/>
        </authorList>
    </citation>
    <scope>NUCLEOTIDE SEQUENCE [GENOMIC RNA]</scope>
</reference>
<proteinExistence type="inferred from homology"/>
<sequence length="587" mass="64475">MNFNHHFTWSLVIISQIFQVQAGFGDPREALLEIQQKHGKPCDCAGGYVSSPPTNSLTTVSCSTYTAYSVTNSLKWQCVSTPTTASPTHIGSCPSQCNSQSYDSVHATCYNHYQQCTIGNKTYLTATMIRDKSPSSGDGNVPTILGNNQNLIIAGCPENKKGQVVCWNSQPSVHMSDGGGPQDKVREIIVNKKFEELHKSLFPELSYHPLALPEARGKEKIDAHTFDLLATVHSLLNVSSQRQLAEDCWLCLRSGDPVPLALPYDNTSCSNSTFFFNCSNCSCLITPPFLVQPFNFTHSVCLYADYQNNSFDIDVGLAGFTNCSSYINISKPSSPLCAPNSSVFVCGNNKAYTYLPTNWTGSCVLATLLPDIDIIPGSEPVPIPAIDHFLGRPKRAIQFIPLVIGLGITTAVSTGTAGLGVSLTQYTKLSHQLISDVQAISSTIQDLQDQVDSLAEVVLQNRRGLDLLTAEQGGICLALQEKCCFYANKSGIVRDKIKNLQDDLEKRRKQLIDNPFWTGFHGLLPYVMPLLGPLLCLLLVLSFGPIIFNKLMTFIKHQIESIQAKPIQVHYHRLEQEDHGGSYLNLT</sequence>
<evidence type="ECO:0000250" key="1"/>
<evidence type="ECO:0000255" key="2"/>
<organismHost>
    <name type="scientific">Macaca mulatta</name>
    <name type="common">Rhesus macaque</name>
    <dbReference type="NCBI Taxonomy" id="9544"/>
</organismHost>
<protein>
    <recommendedName>
        <fullName>Envelope glycoprotein</fullName>
    </recommendedName>
    <alternativeName>
        <fullName>Env polyprotein</fullName>
    </alternativeName>
    <component>
        <recommendedName>
            <fullName>Surface protein</fullName>
            <shortName>SU</shortName>
        </recommendedName>
        <alternativeName>
            <fullName>Glycoprotein 70</fullName>
            <shortName>gp70</shortName>
        </alternativeName>
    </component>
    <component>
        <recommendedName>
            <fullName>Transmembrane protein</fullName>
            <shortName>TM</shortName>
        </recommendedName>
        <alternativeName>
            <fullName>Glycoprotein 20</fullName>
            <shortName>gp20</shortName>
        </alternativeName>
    </component>
    <component>
        <recommendedName>
            <fullName>R-peptide</fullName>
        </recommendedName>
    </component>
</protein>